<organism>
    <name type="scientific">Treponema denticola (strain ATCC 35405 / DSM 14222 / CIP 103919 / JCM 8153 / KCTC 15104)</name>
    <dbReference type="NCBI Taxonomy" id="243275"/>
    <lineage>
        <taxon>Bacteria</taxon>
        <taxon>Pseudomonadati</taxon>
        <taxon>Spirochaetota</taxon>
        <taxon>Spirochaetia</taxon>
        <taxon>Spirochaetales</taxon>
        <taxon>Treponemataceae</taxon>
        <taxon>Treponema</taxon>
    </lineage>
</organism>
<evidence type="ECO:0000255" key="1">
    <source>
        <dbReference type="HAMAP-Rule" id="MF_01337"/>
    </source>
</evidence>
<evidence type="ECO:0000305" key="2"/>
<sequence length="120" mass="13696">MDKKRNDKDRKRFKRKMHIRKSIFGTAERPRMTVFRSNKRISVQVIDDVEGKTLAAVSTMEEALRSLKVNVESGAKVGEEIGKRLKEKNIDTVVFDRNGYLYHGVVKAVADGARKTGIKF</sequence>
<dbReference type="EMBL" id="AE017226">
    <property type="protein sequence ID" value="AAS11274.1"/>
    <property type="molecule type" value="Genomic_DNA"/>
</dbReference>
<dbReference type="RefSeq" id="NP_971393.1">
    <property type="nucleotide sequence ID" value="NC_002967.9"/>
</dbReference>
<dbReference type="RefSeq" id="WP_002670026.1">
    <property type="nucleotide sequence ID" value="NC_002967.9"/>
</dbReference>
<dbReference type="SMR" id="Q73PL6"/>
<dbReference type="STRING" id="243275.TDE_0783"/>
<dbReference type="PaxDb" id="243275-TDE_0783"/>
<dbReference type="GeneID" id="2740661"/>
<dbReference type="KEGG" id="tde:TDE_0783"/>
<dbReference type="PATRIC" id="fig|243275.7.peg.756"/>
<dbReference type="eggNOG" id="COG0256">
    <property type="taxonomic scope" value="Bacteria"/>
</dbReference>
<dbReference type="HOGENOM" id="CLU_098841_0_1_12"/>
<dbReference type="OrthoDB" id="9810939at2"/>
<dbReference type="Proteomes" id="UP000008212">
    <property type="component" value="Chromosome"/>
</dbReference>
<dbReference type="GO" id="GO:0022625">
    <property type="term" value="C:cytosolic large ribosomal subunit"/>
    <property type="evidence" value="ECO:0007669"/>
    <property type="project" value="TreeGrafter"/>
</dbReference>
<dbReference type="GO" id="GO:0008097">
    <property type="term" value="F:5S rRNA binding"/>
    <property type="evidence" value="ECO:0007669"/>
    <property type="project" value="TreeGrafter"/>
</dbReference>
<dbReference type="GO" id="GO:0003735">
    <property type="term" value="F:structural constituent of ribosome"/>
    <property type="evidence" value="ECO:0007669"/>
    <property type="project" value="InterPro"/>
</dbReference>
<dbReference type="GO" id="GO:0006412">
    <property type="term" value="P:translation"/>
    <property type="evidence" value="ECO:0007669"/>
    <property type="project" value="UniProtKB-UniRule"/>
</dbReference>
<dbReference type="CDD" id="cd00432">
    <property type="entry name" value="Ribosomal_L18_L5e"/>
    <property type="match status" value="1"/>
</dbReference>
<dbReference type="FunFam" id="3.30.420.100:FF:000001">
    <property type="entry name" value="50S ribosomal protein L18"/>
    <property type="match status" value="1"/>
</dbReference>
<dbReference type="Gene3D" id="3.30.420.100">
    <property type="match status" value="1"/>
</dbReference>
<dbReference type="HAMAP" id="MF_01337_B">
    <property type="entry name" value="Ribosomal_uL18_B"/>
    <property type="match status" value="1"/>
</dbReference>
<dbReference type="InterPro" id="IPR004389">
    <property type="entry name" value="Ribosomal_uL18_bac-type"/>
</dbReference>
<dbReference type="InterPro" id="IPR005484">
    <property type="entry name" value="Ribosomal_uL18_bac/euk"/>
</dbReference>
<dbReference type="NCBIfam" id="TIGR00060">
    <property type="entry name" value="L18_bact"/>
    <property type="match status" value="1"/>
</dbReference>
<dbReference type="PANTHER" id="PTHR12899">
    <property type="entry name" value="39S RIBOSOMAL PROTEIN L18, MITOCHONDRIAL"/>
    <property type="match status" value="1"/>
</dbReference>
<dbReference type="PANTHER" id="PTHR12899:SF3">
    <property type="entry name" value="LARGE RIBOSOMAL SUBUNIT PROTEIN UL18M"/>
    <property type="match status" value="1"/>
</dbReference>
<dbReference type="Pfam" id="PF00861">
    <property type="entry name" value="Ribosomal_L18p"/>
    <property type="match status" value="1"/>
</dbReference>
<dbReference type="SUPFAM" id="SSF53137">
    <property type="entry name" value="Translational machinery components"/>
    <property type="match status" value="1"/>
</dbReference>
<proteinExistence type="inferred from homology"/>
<protein>
    <recommendedName>
        <fullName evidence="1">Large ribosomal subunit protein uL18</fullName>
    </recommendedName>
    <alternativeName>
        <fullName evidence="2">50S ribosomal protein L18</fullName>
    </alternativeName>
</protein>
<accession>Q73PL6</accession>
<feature type="chain" id="PRO_0000131375" description="Large ribosomal subunit protein uL18">
    <location>
        <begin position="1"/>
        <end position="120"/>
    </location>
</feature>
<name>RL18_TREDE</name>
<gene>
    <name evidence="1" type="primary">rplR</name>
    <name type="ordered locus">TDE_0783</name>
</gene>
<comment type="function">
    <text evidence="1">This is one of the proteins that bind and probably mediate the attachment of the 5S RNA into the large ribosomal subunit, where it forms part of the central protuberance.</text>
</comment>
<comment type="subunit">
    <text evidence="1">Part of the 50S ribosomal subunit; part of the 5S rRNA/L5/L18/L25 subcomplex. Contacts the 5S and 23S rRNAs.</text>
</comment>
<comment type="similarity">
    <text evidence="1">Belongs to the universal ribosomal protein uL18 family.</text>
</comment>
<keyword id="KW-1185">Reference proteome</keyword>
<keyword id="KW-0687">Ribonucleoprotein</keyword>
<keyword id="KW-0689">Ribosomal protein</keyword>
<keyword id="KW-0694">RNA-binding</keyword>
<keyword id="KW-0699">rRNA-binding</keyword>
<reference key="1">
    <citation type="journal article" date="2004" name="Proc. Natl. Acad. Sci. U.S.A.">
        <title>Comparison of the genome of the oral pathogen Treponema denticola with other spirochete genomes.</title>
        <authorList>
            <person name="Seshadri R."/>
            <person name="Myers G.S.A."/>
            <person name="Tettelin H."/>
            <person name="Eisen J.A."/>
            <person name="Heidelberg J.F."/>
            <person name="Dodson R.J."/>
            <person name="Davidsen T.M."/>
            <person name="DeBoy R.T."/>
            <person name="Fouts D.E."/>
            <person name="Haft D.H."/>
            <person name="Selengut J."/>
            <person name="Ren Q."/>
            <person name="Brinkac L.M."/>
            <person name="Madupu R."/>
            <person name="Kolonay J.F."/>
            <person name="Durkin S.A."/>
            <person name="Daugherty S.C."/>
            <person name="Shetty J."/>
            <person name="Shvartsbeyn A."/>
            <person name="Gebregeorgis E."/>
            <person name="Geer K."/>
            <person name="Tsegaye G."/>
            <person name="Malek J.A."/>
            <person name="Ayodeji B."/>
            <person name="Shatsman S."/>
            <person name="McLeod M.P."/>
            <person name="Smajs D."/>
            <person name="Howell J.K."/>
            <person name="Pal S."/>
            <person name="Amin A."/>
            <person name="Vashisth P."/>
            <person name="McNeill T.Z."/>
            <person name="Xiang Q."/>
            <person name="Sodergren E."/>
            <person name="Baca E."/>
            <person name="Weinstock G.M."/>
            <person name="Norris S.J."/>
            <person name="Fraser C.M."/>
            <person name="Paulsen I.T."/>
        </authorList>
    </citation>
    <scope>NUCLEOTIDE SEQUENCE [LARGE SCALE GENOMIC DNA]</scope>
    <source>
        <strain>ATCC 35405 / DSM 14222 / CIP 103919 / JCM 8153 / KCTC 15104</strain>
    </source>
</reference>